<gene>
    <name evidence="1" type="primary">rplM</name>
    <name type="ordered locus">Mmc1_0246</name>
</gene>
<dbReference type="EMBL" id="CP000471">
    <property type="protein sequence ID" value="ABK42773.1"/>
    <property type="molecule type" value="Genomic_DNA"/>
</dbReference>
<dbReference type="RefSeq" id="WP_011711945.1">
    <property type="nucleotide sequence ID" value="NC_008576.1"/>
</dbReference>
<dbReference type="SMR" id="A0L480"/>
<dbReference type="STRING" id="156889.Mmc1_0246"/>
<dbReference type="KEGG" id="mgm:Mmc1_0246"/>
<dbReference type="eggNOG" id="COG0102">
    <property type="taxonomic scope" value="Bacteria"/>
</dbReference>
<dbReference type="HOGENOM" id="CLU_082184_2_2_5"/>
<dbReference type="OrthoDB" id="9801330at2"/>
<dbReference type="Proteomes" id="UP000002586">
    <property type="component" value="Chromosome"/>
</dbReference>
<dbReference type="GO" id="GO:0022625">
    <property type="term" value="C:cytosolic large ribosomal subunit"/>
    <property type="evidence" value="ECO:0007669"/>
    <property type="project" value="TreeGrafter"/>
</dbReference>
<dbReference type="GO" id="GO:0003729">
    <property type="term" value="F:mRNA binding"/>
    <property type="evidence" value="ECO:0007669"/>
    <property type="project" value="TreeGrafter"/>
</dbReference>
<dbReference type="GO" id="GO:0003735">
    <property type="term" value="F:structural constituent of ribosome"/>
    <property type="evidence" value="ECO:0007669"/>
    <property type="project" value="InterPro"/>
</dbReference>
<dbReference type="GO" id="GO:0017148">
    <property type="term" value="P:negative regulation of translation"/>
    <property type="evidence" value="ECO:0007669"/>
    <property type="project" value="TreeGrafter"/>
</dbReference>
<dbReference type="GO" id="GO:0006412">
    <property type="term" value="P:translation"/>
    <property type="evidence" value="ECO:0007669"/>
    <property type="project" value="UniProtKB-UniRule"/>
</dbReference>
<dbReference type="CDD" id="cd00392">
    <property type="entry name" value="Ribosomal_L13"/>
    <property type="match status" value="1"/>
</dbReference>
<dbReference type="FunFam" id="3.90.1180.10:FF:000001">
    <property type="entry name" value="50S ribosomal protein L13"/>
    <property type="match status" value="1"/>
</dbReference>
<dbReference type="Gene3D" id="3.90.1180.10">
    <property type="entry name" value="Ribosomal protein L13"/>
    <property type="match status" value="1"/>
</dbReference>
<dbReference type="HAMAP" id="MF_01366">
    <property type="entry name" value="Ribosomal_uL13"/>
    <property type="match status" value="1"/>
</dbReference>
<dbReference type="InterPro" id="IPR005822">
    <property type="entry name" value="Ribosomal_uL13"/>
</dbReference>
<dbReference type="InterPro" id="IPR005823">
    <property type="entry name" value="Ribosomal_uL13_bac-type"/>
</dbReference>
<dbReference type="InterPro" id="IPR023563">
    <property type="entry name" value="Ribosomal_uL13_CS"/>
</dbReference>
<dbReference type="InterPro" id="IPR036899">
    <property type="entry name" value="Ribosomal_uL13_sf"/>
</dbReference>
<dbReference type="NCBIfam" id="TIGR01066">
    <property type="entry name" value="rplM_bact"/>
    <property type="match status" value="1"/>
</dbReference>
<dbReference type="PANTHER" id="PTHR11545:SF2">
    <property type="entry name" value="LARGE RIBOSOMAL SUBUNIT PROTEIN UL13M"/>
    <property type="match status" value="1"/>
</dbReference>
<dbReference type="PANTHER" id="PTHR11545">
    <property type="entry name" value="RIBOSOMAL PROTEIN L13"/>
    <property type="match status" value="1"/>
</dbReference>
<dbReference type="Pfam" id="PF00572">
    <property type="entry name" value="Ribosomal_L13"/>
    <property type="match status" value="1"/>
</dbReference>
<dbReference type="PIRSF" id="PIRSF002181">
    <property type="entry name" value="Ribosomal_L13"/>
    <property type="match status" value="1"/>
</dbReference>
<dbReference type="SUPFAM" id="SSF52161">
    <property type="entry name" value="Ribosomal protein L13"/>
    <property type="match status" value="1"/>
</dbReference>
<dbReference type="PROSITE" id="PS00783">
    <property type="entry name" value="RIBOSOMAL_L13"/>
    <property type="match status" value="1"/>
</dbReference>
<name>RL13_MAGMM</name>
<protein>
    <recommendedName>
        <fullName evidence="1">Large ribosomal subunit protein uL13</fullName>
    </recommendedName>
    <alternativeName>
        <fullName evidence="2">50S ribosomal protein L13</fullName>
    </alternativeName>
</protein>
<organism>
    <name type="scientific">Magnetococcus marinus (strain ATCC BAA-1437 / JCM 17883 / MC-1)</name>
    <dbReference type="NCBI Taxonomy" id="156889"/>
    <lineage>
        <taxon>Bacteria</taxon>
        <taxon>Pseudomonadati</taxon>
        <taxon>Pseudomonadota</taxon>
        <taxon>Alphaproteobacteria</taxon>
        <taxon>Magnetococcales</taxon>
        <taxon>Magnetococcaceae</taxon>
        <taxon>Magnetococcus</taxon>
    </lineage>
</organism>
<proteinExistence type="inferred from homology"/>
<comment type="function">
    <text evidence="1">This protein is one of the early assembly proteins of the 50S ribosomal subunit, although it is not seen to bind rRNA by itself. It is important during the early stages of 50S assembly.</text>
</comment>
<comment type="subunit">
    <text evidence="1">Part of the 50S ribosomal subunit.</text>
</comment>
<comment type="similarity">
    <text evidence="1">Belongs to the universal ribosomal protein uL13 family.</text>
</comment>
<feature type="chain" id="PRO_1000055404" description="Large ribosomal subunit protein uL13">
    <location>
        <begin position="1"/>
        <end position="144"/>
    </location>
</feature>
<keyword id="KW-1185">Reference proteome</keyword>
<keyword id="KW-0687">Ribonucleoprotein</keyword>
<keyword id="KW-0689">Ribosomal protein</keyword>
<reference key="1">
    <citation type="journal article" date="2009" name="Appl. Environ. Microbiol.">
        <title>Complete genome sequence of the chemolithoautotrophic marine magnetotactic coccus strain MC-1.</title>
        <authorList>
            <person name="Schubbe S."/>
            <person name="Williams T.J."/>
            <person name="Xie G."/>
            <person name="Kiss H.E."/>
            <person name="Brettin T.S."/>
            <person name="Martinez D."/>
            <person name="Ross C.A."/>
            <person name="Schuler D."/>
            <person name="Cox B.L."/>
            <person name="Nealson K.H."/>
            <person name="Bazylinski D.A."/>
        </authorList>
    </citation>
    <scope>NUCLEOTIDE SEQUENCE [LARGE SCALE GENOMIC DNA]</scope>
    <source>
        <strain>ATCC BAA-1437 / JCM 17883 / MC-1</strain>
    </source>
</reference>
<evidence type="ECO:0000255" key="1">
    <source>
        <dbReference type="HAMAP-Rule" id="MF_01366"/>
    </source>
</evidence>
<evidence type="ECO:0000305" key="2"/>
<sequence>MKSFVAKPSTIERKWYVIDATDMVVGRLASEVAKRLRGKHKPTYTPFMDCGDNIIIVNAEKVRFTGNKRNDKVYYWHSRFPGGLKSITADKELSGNHPERVLEKAIKGMLPKNVLGRQMFRKLNVYKGSEHPHTAQQPEELKLG</sequence>
<accession>A0L480</accession>